<gene>
    <name type="primary">SLAH2</name>
    <name type="ordered locus">At4g27970</name>
    <name type="ORF">T13J8.80</name>
</gene>
<proteinExistence type="evidence at transcript level"/>
<name>SLAH2_ARATH</name>
<evidence type="ECO:0000250" key="1"/>
<evidence type="ECO:0000250" key="2">
    <source>
        <dbReference type="UniProtKB" id="Q9LD83"/>
    </source>
</evidence>
<evidence type="ECO:0000255" key="3"/>
<evidence type="ECO:0000256" key="4">
    <source>
        <dbReference type="SAM" id="MobiDB-lite"/>
    </source>
</evidence>
<evidence type="ECO:0000269" key="5">
    <source>
    </source>
</evidence>
<evidence type="ECO:0000305" key="6"/>
<organism>
    <name type="scientific">Arabidopsis thaliana</name>
    <name type="common">Mouse-ear cress</name>
    <dbReference type="NCBI Taxonomy" id="3702"/>
    <lineage>
        <taxon>Eukaryota</taxon>
        <taxon>Viridiplantae</taxon>
        <taxon>Streptophyta</taxon>
        <taxon>Embryophyta</taxon>
        <taxon>Tracheophyta</taxon>
        <taxon>Spermatophyta</taxon>
        <taxon>Magnoliopsida</taxon>
        <taxon>eudicotyledons</taxon>
        <taxon>Gunneridae</taxon>
        <taxon>Pentapetalae</taxon>
        <taxon>rosids</taxon>
        <taxon>malvids</taxon>
        <taxon>Brassicales</taxon>
        <taxon>Brassicaceae</taxon>
        <taxon>Camelineae</taxon>
        <taxon>Arabidopsis</taxon>
    </lineage>
</organism>
<accession>Q9ASQ7</accession>
<accession>Q9SUE2</accession>
<keyword id="KW-1003">Cell membrane</keyword>
<keyword id="KW-0406">Ion transport</keyword>
<keyword id="KW-0472">Membrane</keyword>
<keyword id="KW-0597">Phosphoprotein</keyword>
<keyword id="KW-1185">Reference proteome</keyword>
<keyword id="KW-0812">Transmembrane</keyword>
<keyword id="KW-1133">Transmembrane helix</keyword>
<keyword id="KW-0813">Transport</keyword>
<reference key="1">
    <citation type="journal article" date="1999" name="Nature">
        <title>Sequence and analysis of chromosome 4 of the plant Arabidopsis thaliana.</title>
        <authorList>
            <person name="Mayer K.F.X."/>
            <person name="Schueller C."/>
            <person name="Wambutt R."/>
            <person name="Murphy G."/>
            <person name="Volckaert G."/>
            <person name="Pohl T."/>
            <person name="Duesterhoeft A."/>
            <person name="Stiekema W."/>
            <person name="Entian K.-D."/>
            <person name="Terryn N."/>
            <person name="Harris B."/>
            <person name="Ansorge W."/>
            <person name="Brandt P."/>
            <person name="Grivell L.A."/>
            <person name="Rieger M."/>
            <person name="Weichselgartner M."/>
            <person name="de Simone V."/>
            <person name="Obermaier B."/>
            <person name="Mache R."/>
            <person name="Mueller M."/>
            <person name="Kreis M."/>
            <person name="Delseny M."/>
            <person name="Puigdomenech P."/>
            <person name="Watson M."/>
            <person name="Schmidtheini T."/>
            <person name="Reichert B."/>
            <person name="Portetelle D."/>
            <person name="Perez-Alonso M."/>
            <person name="Boutry M."/>
            <person name="Bancroft I."/>
            <person name="Vos P."/>
            <person name="Hoheisel J."/>
            <person name="Zimmermann W."/>
            <person name="Wedler H."/>
            <person name="Ridley P."/>
            <person name="Langham S.-A."/>
            <person name="McCullagh B."/>
            <person name="Bilham L."/>
            <person name="Robben J."/>
            <person name="van der Schueren J."/>
            <person name="Grymonprez B."/>
            <person name="Chuang Y.-J."/>
            <person name="Vandenbussche F."/>
            <person name="Braeken M."/>
            <person name="Weltjens I."/>
            <person name="Voet M."/>
            <person name="Bastiaens I."/>
            <person name="Aert R."/>
            <person name="Defoor E."/>
            <person name="Weitzenegger T."/>
            <person name="Bothe G."/>
            <person name="Ramsperger U."/>
            <person name="Hilbert H."/>
            <person name="Braun M."/>
            <person name="Holzer E."/>
            <person name="Brandt A."/>
            <person name="Peters S."/>
            <person name="van Staveren M."/>
            <person name="Dirkse W."/>
            <person name="Mooijman P."/>
            <person name="Klein Lankhorst R."/>
            <person name="Rose M."/>
            <person name="Hauf J."/>
            <person name="Koetter P."/>
            <person name="Berneiser S."/>
            <person name="Hempel S."/>
            <person name="Feldpausch M."/>
            <person name="Lamberth S."/>
            <person name="Van den Daele H."/>
            <person name="De Keyser A."/>
            <person name="Buysshaert C."/>
            <person name="Gielen J."/>
            <person name="Villarroel R."/>
            <person name="De Clercq R."/>
            <person name="van Montagu M."/>
            <person name="Rogers J."/>
            <person name="Cronin A."/>
            <person name="Quail M.A."/>
            <person name="Bray-Allen S."/>
            <person name="Clark L."/>
            <person name="Doggett J."/>
            <person name="Hall S."/>
            <person name="Kay M."/>
            <person name="Lennard N."/>
            <person name="McLay K."/>
            <person name="Mayes R."/>
            <person name="Pettett A."/>
            <person name="Rajandream M.A."/>
            <person name="Lyne M."/>
            <person name="Benes V."/>
            <person name="Rechmann S."/>
            <person name="Borkova D."/>
            <person name="Bloecker H."/>
            <person name="Scharfe M."/>
            <person name="Grimm M."/>
            <person name="Loehnert T.-H."/>
            <person name="Dose S."/>
            <person name="de Haan M."/>
            <person name="Maarse A.C."/>
            <person name="Schaefer M."/>
            <person name="Mueller-Auer S."/>
            <person name="Gabel C."/>
            <person name="Fuchs M."/>
            <person name="Fartmann B."/>
            <person name="Granderath K."/>
            <person name="Dauner D."/>
            <person name="Herzl A."/>
            <person name="Neumann S."/>
            <person name="Argiriou A."/>
            <person name="Vitale D."/>
            <person name="Liguori R."/>
            <person name="Piravandi E."/>
            <person name="Massenet O."/>
            <person name="Quigley F."/>
            <person name="Clabauld G."/>
            <person name="Muendlein A."/>
            <person name="Felber R."/>
            <person name="Schnabl S."/>
            <person name="Hiller R."/>
            <person name="Schmidt W."/>
            <person name="Lecharny A."/>
            <person name="Aubourg S."/>
            <person name="Chefdor F."/>
            <person name="Cooke R."/>
            <person name="Berger C."/>
            <person name="Monfort A."/>
            <person name="Casacuberta E."/>
            <person name="Gibbons T."/>
            <person name="Weber N."/>
            <person name="Vandenbol M."/>
            <person name="Bargues M."/>
            <person name="Terol J."/>
            <person name="Torres A."/>
            <person name="Perez-Perez A."/>
            <person name="Purnelle B."/>
            <person name="Bent E."/>
            <person name="Johnson S."/>
            <person name="Tacon D."/>
            <person name="Jesse T."/>
            <person name="Heijnen L."/>
            <person name="Schwarz S."/>
            <person name="Scholler P."/>
            <person name="Heber S."/>
            <person name="Francs P."/>
            <person name="Bielke C."/>
            <person name="Frishman D."/>
            <person name="Haase D."/>
            <person name="Lemcke K."/>
            <person name="Mewes H.-W."/>
            <person name="Stocker S."/>
            <person name="Zaccaria P."/>
            <person name="Bevan M."/>
            <person name="Wilson R.K."/>
            <person name="de la Bastide M."/>
            <person name="Habermann K."/>
            <person name="Parnell L."/>
            <person name="Dedhia N."/>
            <person name="Gnoj L."/>
            <person name="Schutz K."/>
            <person name="Huang E."/>
            <person name="Spiegel L."/>
            <person name="Sekhon M."/>
            <person name="Murray J."/>
            <person name="Sheet P."/>
            <person name="Cordes M."/>
            <person name="Abu-Threideh J."/>
            <person name="Stoneking T."/>
            <person name="Kalicki J."/>
            <person name="Graves T."/>
            <person name="Harmon G."/>
            <person name="Edwards J."/>
            <person name="Latreille P."/>
            <person name="Courtney L."/>
            <person name="Cloud J."/>
            <person name="Abbott A."/>
            <person name="Scott K."/>
            <person name="Johnson D."/>
            <person name="Minx P."/>
            <person name="Bentley D."/>
            <person name="Fulton B."/>
            <person name="Miller N."/>
            <person name="Greco T."/>
            <person name="Kemp K."/>
            <person name="Kramer J."/>
            <person name="Fulton L."/>
            <person name="Mardis E."/>
            <person name="Dante M."/>
            <person name="Pepin K."/>
            <person name="Hillier L.W."/>
            <person name="Nelson J."/>
            <person name="Spieth J."/>
            <person name="Ryan E."/>
            <person name="Andrews S."/>
            <person name="Geisel C."/>
            <person name="Layman D."/>
            <person name="Du H."/>
            <person name="Ali J."/>
            <person name="Berghoff A."/>
            <person name="Jones K."/>
            <person name="Drone K."/>
            <person name="Cotton M."/>
            <person name="Joshu C."/>
            <person name="Antonoiu B."/>
            <person name="Zidanic M."/>
            <person name="Strong C."/>
            <person name="Sun H."/>
            <person name="Lamar B."/>
            <person name="Yordan C."/>
            <person name="Ma P."/>
            <person name="Zhong J."/>
            <person name="Preston R."/>
            <person name="Vil D."/>
            <person name="Shekher M."/>
            <person name="Matero A."/>
            <person name="Shah R."/>
            <person name="Swaby I.K."/>
            <person name="O'Shaughnessy A."/>
            <person name="Rodriguez M."/>
            <person name="Hoffman J."/>
            <person name="Till S."/>
            <person name="Granat S."/>
            <person name="Shohdy N."/>
            <person name="Hasegawa A."/>
            <person name="Hameed A."/>
            <person name="Lodhi M."/>
            <person name="Johnson A."/>
            <person name="Chen E."/>
            <person name="Marra M.A."/>
            <person name="Martienssen R."/>
            <person name="McCombie W.R."/>
        </authorList>
    </citation>
    <scope>NUCLEOTIDE SEQUENCE [LARGE SCALE GENOMIC DNA]</scope>
    <source>
        <strain>cv. Columbia</strain>
    </source>
</reference>
<reference key="2">
    <citation type="journal article" date="2017" name="Plant J.">
        <title>Araport11: a complete reannotation of the Arabidopsis thaliana reference genome.</title>
        <authorList>
            <person name="Cheng C.Y."/>
            <person name="Krishnakumar V."/>
            <person name="Chan A.P."/>
            <person name="Thibaud-Nissen F."/>
            <person name="Schobel S."/>
            <person name="Town C.D."/>
        </authorList>
    </citation>
    <scope>GENOME REANNOTATION</scope>
    <source>
        <strain>cv. Columbia</strain>
    </source>
</reference>
<reference key="3">
    <citation type="journal article" date="2003" name="Science">
        <title>Empirical analysis of transcriptional activity in the Arabidopsis genome.</title>
        <authorList>
            <person name="Yamada K."/>
            <person name="Lim J."/>
            <person name="Dale J.M."/>
            <person name="Chen H."/>
            <person name="Shinn P."/>
            <person name="Palm C.J."/>
            <person name="Southwick A.M."/>
            <person name="Wu H.C."/>
            <person name="Kim C.J."/>
            <person name="Nguyen M."/>
            <person name="Pham P.K."/>
            <person name="Cheuk R.F."/>
            <person name="Karlin-Newmann G."/>
            <person name="Liu S.X."/>
            <person name="Lam B."/>
            <person name="Sakano H."/>
            <person name="Wu T."/>
            <person name="Yu G."/>
            <person name="Miranda M."/>
            <person name="Quach H.L."/>
            <person name="Tripp M."/>
            <person name="Chang C.H."/>
            <person name="Lee J.M."/>
            <person name="Toriumi M.J."/>
            <person name="Chan M.M."/>
            <person name="Tang C.C."/>
            <person name="Onodera C.S."/>
            <person name="Deng J.M."/>
            <person name="Akiyama K."/>
            <person name="Ansari Y."/>
            <person name="Arakawa T."/>
            <person name="Banh J."/>
            <person name="Banno F."/>
            <person name="Bowser L."/>
            <person name="Brooks S.Y."/>
            <person name="Carninci P."/>
            <person name="Chao Q."/>
            <person name="Choy N."/>
            <person name="Enju A."/>
            <person name="Goldsmith A.D."/>
            <person name="Gurjal M."/>
            <person name="Hansen N.F."/>
            <person name="Hayashizaki Y."/>
            <person name="Johnson-Hopson C."/>
            <person name="Hsuan V.W."/>
            <person name="Iida K."/>
            <person name="Karnes M."/>
            <person name="Khan S."/>
            <person name="Koesema E."/>
            <person name="Ishida J."/>
            <person name="Jiang P.X."/>
            <person name="Jones T."/>
            <person name="Kawai J."/>
            <person name="Kamiya A."/>
            <person name="Meyers C."/>
            <person name="Nakajima M."/>
            <person name="Narusaka M."/>
            <person name="Seki M."/>
            <person name="Sakurai T."/>
            <person name="Satou M."/>
            <person name="Tamse R."/>
            <person name="Vaysberg M."/>
            <person name="Wallender E.K."/>
            <person name="Wong C."/>
            <person name="Yamamura Y."/>
            <person name="Yuan S."/>
            <person name="Shinozaki K."/>
            <person name="Davis R.W."/>
            <person name="Theologis A."/>
            <person name="Ecker J.R."/>
        </authorList>
    </citation>
    <scope>NUCLEOTIDE SEQUENCE [LARGE SCALE MRNA]</scope>
    <source>
        <strain>cv. Columbia</strain>
    </source>
</reference>
<reference key="4">
    <citation type="journal article" date="2008" name="Nature">
        <title>CO2 regulator SLAC1 and its homologues are essential for anion homeostasis in plant cells.</title>
        <authorList>
            <person name="Negi J."/>
            <person name="Matsuda O."/>
            <person name="Nagasawa T."/>
            <person name="Oba Y."/>
            <person name="Takahashi H."/>
            <person name="Kawai-Yamada M."/>
            <person name="Uchimiya H."/>
            <person name="Hashimoto M."/>
            <person name="Iba K."/>
        </authorList>
    </citation>
    <scope>FUNCTION</scope>
    <scope>SUBCELLULAR LOCATION</scope>
    <scope>TISSUE SPECIFICITY</scope>
    <scope>GENE FAMILY</scope>
    <scope>NOMENCLATURE</scope>
    <source>
        <strain>cv. Columbia</strain>
    </source>
</reference>
<protein>
    <recommendedName>
        <fullName>S-type anion channel SLAH2</fullName>
    </recommendedName>
    <alternativeName>
        <fullName>SLAC1-homolog protein 2</fullName>
    </alternativeName>
</protein>
<comment type="function">
    <text evidence="5">Slow, weak voltage-dependent S-type anion efflux channel involved in maintenance of anion homeostasis.</text>
</comment>
<comment type="subunit">
    <text evidence="1">Homotrimer.</text>
</comment>
<comment type="subcellular location">
    <subcellularLocation>
        <location evidence="5">Cell membrane</location>
        <topology evidence="5">Multi-pass membrane protein</topology>
    </subcellularLocation>
</comment>
<comment type="tissue specificity">
    <text evidence="5">Expressed in lateral root primordia and tap root tips.</text>
</comment>
<comment type="similarity">
    <text evidence="6">Belongs to the SLAC1 S-type anion channel family.</text>
</comment>
<comment type="sequence caution" evidence="6">
    <conflict type="erroneous gene model prediction">
        <sequence resource="EMBL-CDS" id="CAB36766"/>
    </conflict>
</comment>
<comment type="sequence caution" evidence="6">
    <conflict type="erroneous gene model prediction">
        <sequence resource="EMBL-CDS" id="CAB79599"/>
    </conflict>
</comment>
<dbReference type="EMBL" id="AL035524">
    <property type="protein sequence ID" value="CAB36766.1"/>
    <property type="status" value="ALT_SEQ"/>
    <property type="molecule type" value="Genomic_DNA"/>
</dbReference>
<dbReference type="EMBL" id="AL161572">
    <property type="protein sequence ID" value="CAB79599.1"/>
    <property type="status" value="ALT_SEQ"/>
    <property type="molecule type" value="Genomic_DNA"/>
</dbReference>
<dbReference type="EMBL" id="CP002687">
    <property type="protein sequence ID" value="AEE85415.1"/>
    <property type="molecule type" value="Genomic_DNA"/>
</dbReference>
<dbReference type="EMBL" id="CP002687">
    <property type="protein sequence ID" value="ANM66084.1"/>
    <property type="molecule type" value="Genomic_DNA"/>
</dbReference>
<dbReference type="EMBL" id="AF367337">
    <property type="protein sequence ID" value="AAK32924.1"/>
    <property type="molecule type" value="mRNA"/>
</dbReference>
<dbReference type="EMBL" id="BT002238">
    <property type="protein sequence ID" value="AAN72249.1"/>
    <property type="molecule type" value="mRNA"/>
</dbReference>
<dbReference type="PIR" id="T02898">
    <property type="entry name" value="T02898"/>
</dbReference>
<dbReference type="RefSeq" id="NP_001320078.1">
    <property type="nucleotide sequence ID" value="NM_001341891.1"/>
</dbReference>
<dbReference type="RefSeq" id="NP_567792.1">
    <property type="nucleotide sequence ID" value="NM_118935.3"/>
</dbReference>
<dbReference type="SMR" id="Q9ASQ7"/>
<dbReference type="BioGRID" id="14197">
    <property type="interactions" value="3"/>
</dbReference>
<dbReference type="IntAct" id="Q9ASQ7">
    <property type="interactions" value="3"/>
</dbReference>
<dbReference type="STRING" id="3702.Q9ASQ7"/>
<dbReference type="iPTMnet" id="Q9ASQ7"/>
<dbReference type="PaxDb" id="3702-AT4G27970.1"/>
<dbReference type="ProteomicsDB" id="232511"/>
<dbReference type="EnsemblPlants" id="AT4G27970.1">
    <property type="protein sequence ID" value="AT4G27970.1"/>
    <property type="gene ID" value="AT4G27970"/>
</dbReference>
<dbReference type="EnsemblPlants" id="AT4G27970.6">
    <property type="protein sequence ID" value="AT4G27970.6"/>
    <property type="gene ID" value="AT4G27970"/>
</dbReference>
<dbReference type="GeneID" id="828910"/>
<dbReference type="Gramene" id="AT4G27970.1">
    <property type="protein sequence ID" value="AT4G27970.1"/>
    <property type="gene ID" value="AT4G27970"/>
</dbReference>
<dbReference type="Gramene" id="AT4G27970.6">
    <property type="protein sequence ID" value="AT4G27970.6"/>
    <property type="gene ID" value="AT4G27970"/>
</dbReference>
<dbReference type="KEGG" id="ath:AT4G27970"/>
<dbReference type="Araport" id="AT4G27970"/>
<dbReference type="TAIR" id="AT4G27970">
    <property type="gene designation" value="SLAH2"/>
</dbReference>
<dbReference type="eggNOG" id="ENOG502QQKN">
    <property type="taxonomic scope" value="Eukaryota"/>
</dbReference>
<dbReference type="HOGENOM" id="CLU_017679_1_0_1"/>
<dbReference type="InParanoid" id="Q9ASQ7"/>
<dbReference type="OMA" id="WAKINGR"/>
<dbReference type="PhylomeDB" id="Q9ASQ7"/>
<dbReference type="PRO" id="PR:Q9ASQ7"/>
<dbReference type="Proteomes" id="UP000006548">
    <property type="component" value="Chromosome 4"/>
</dbReference>
<dbReference type="ExpressionAtlas" id="Q9ASQ7">
    <property type="expression patterns" value="baseline and differential"/>
</dbReference>
<dbReference type="GO" id="GO:0005886">
    <property type="term" value="C:plasma membrane"/>
    <property type="evidence" value="ECO:0000314"/>
    <property type="project" value="TAIR"/>
</dbReference>
<dbReference type="GO" id="GO:0008308">
    <property type="term" value="F:voltage-gated monoatomic anion channel activity"/>
    <property type="evidence" value="ECO:0007669"/>
    <property type="project" value="InterPro"/>
</dbReference>
<dbReference type="GO" id="GO:0006873">
    <property type="term" value="P:intracellular monoatomic ion homeostasis"/>
    <property type="evidence" value="ECO:0007669"/>
    <property type="project" value="InterPro"/>
</dbReference>
<dbReference type="CDD" id="cd09323">
    <property type="entry name" value="TDT_SLAC1_like"/>
    <property type="match status" value="1"/>
</dbReference>
<dbReference type="Gene3D" id="1.50.10.150">
    <property type="entry name" value="Voltage-dependent anion channel"/>
    <property type="match status" value="1"/>
</dbReference>
<dbReference type="InterPro" id="IPR030183">
    <property type="entry name" value="SLAC/SLAH"/>
</dbReference>
<dbReference type="InterPro" id="IPR004695">
    <property type="entry name" value="SLAC1/Mae1/Ssu1/TehA"/>
</dbReference>
<dbReference type="InterPro" id="IPR038665">
    <property type="entry name" value="Voltage-dep_anion_channel_sf"/>
</dbReference>
<dbReference type="PANTHER" id="PTHR31269:SF33">
    <property type="entry name" value="S-TYPE ANION CHANNEL SLAH2"/>
    <property type="match status" value="1"/>
</dbReference>
<dbReference type="PANTHER" id="PTHR31269">
    <property type="entry name" value="S-TYPE ANION CHANNEL SLAH3"/>
    <property type="match status" value="1"/>
</dbReference>
<dbReference type="Pfam" id="PF03595">
    <property type="entry name" value="SLAC1"/>
    <property type="match status" value="1"/>
</dbReference>
<sequence>MNNPRSVSPLVSPANHSDLLENQRQSGSGDFSRLEKRIGARKMKFHSKSMPRGAMFLDQEASRNFHDKRYDLFRTMSGKLERQISNLRGKPTESSLQDHKEITESLTADRYFDALQGPELETLKEKEKIVLPEDKTWPFLLRFPITSYGMCLGVSSQAIMWKTLATTEAEKFLHVTQVINHVLWWISLLLLLAVSITYLFKTILFFEAVRREFRHPIRVNFFFAPLISILFLALGIPHSIISHLPSTLWYFLMAPILFLEMKIYGQWMSGGQRRLSKVANPTNHLSIVGNFAGALLGASMGLKEGPIFFFAIGLAYYLVLFVTLYQRLPTNETLPKELHPVFFLFVAAPAVASMAWTKISASFDLGSRLAYFISLFLYFSLVCRINLFRGFKFSLAWWAYTFPMTAVASATIKYSDEVTGVATKILSVVMSGAATLTVIAVLGLTVMHAFVQRDLFPNDVVIAISAEQPKQKRWFKHLTKESYGNNERCPKILDPEDNQIDLESPPLVNVDSSTVQNSN</sequence>
<feature type="chain" id="PRO_0000404261" description="S-type anion channel SLAH2">
    <location>
        <begin position="1"/>
        <end position="519"/>
    </location>
</feature>
<feature type="topological domain" description="Cytoplasmic" evidence="6">
    <location>
        <begin position="1"/>
        <end position="140"/>
    </location>
</feature>
<feature type="transmembrane region" description="Helical" evidence="3">
    <location>
        <begin position="141"/>
        <end position="161"/>
    </location>
</feature>
<feature type="topological domain" description="Extracellular" evidence="6">
    <location>
        <begin position="162"/>
        <end position="185"/>
    </location>
</feature>
<feature type="transmembrane region" description="Helical" evidence="3">
    <location>
        <begin position="186"/>
        <end position="206"/>
    </location>
</feature>
<feature type="topological domain" description="Cytoplasmic" evidence="6">
    <location>
        <begin position="207"/>
        <end position="220"/>
    </location>
</feature>
<feature type="transmembrane region" description="Helical" evidence="3">
    <location>
        <begin position="221"/>
        <end position="241"/>
    </location>
</feature>
<feature type="topological domain" description="Extracellular" evidence="6">
    <location>
        <begin position="242"/>
        <end position="247"/>
    </location>
</feature>
<feature type="transmembrane region" description="Helical" evidence="3">
    <location>
        <begin position="248"/>
        <end position="268"/>
    </location>
</feature>
<feature type="topological domain" description="Cytoplasmic" evidence="6">
    <location>
        <begin position="269"/>
        <end position="281"/>
    </location>
</feature>
<feature type="transmembrane region" description="Helical" evidence="3">
    <location>
        <begin position="282"/>
        <end position="302"/>
    </location>
</feature>
<feature type="topological domain" description="Extracellular" evidence="6">
    <location>
        <begin position="303"/>
        <end position="304"/>
    </location>
</feature>
<feature type="transmembrane region" description="Helical" evidence="3">
    <location>
        <begin position="305"/>
        <end position="325"/>
    </location>
</feature>
<feature type="topological domain" description="Cytoplasmic" evidence="6">
    <location>
        <begin position="326"/>
        <end position="340"/>
    </location>
</feature>
<feature type="transmembrane region" description="Helical" evidence="3">
    <location>
        <begin position="341"/>
        <end position="361"/>
    </location>
</feature>
<feature type="topological domain" description="Extracellular" evidence="6">
    <location>
        <position position="362"/>
    </location>
</feature>
<feature type="transmembrane region" description="Helical" evidence="3">
    <location>
        <begin position="363"/>
        <end position="383"/>
    </location>
</feature>
<feature type="topological domain" description="Cytoplasmic" evidence="6">
    <location>
        <begin position="384"/>
        <end position="389"/>
    </location>
</feature>
<feature type="transmembrane region" description="Helical" evidence="3">
    <location>
        <begin position="390"/>
        <end position="410"/>
    </location>
</feature>
<feature type="topological domain" description="Extracellular" evidence="6">
    <location>
        <begin position="411"/>
        <end position="424"/>
    </location>
</feature>
<feature type="transmembrane region" description="Helical" evidence="3">
    <location>
        <begin position="425"/>
        <end position="445"/>
    </location>
</feature>
<feature type="topological domain" description="Cytoplasmic" evidence="6">
    <location>
        <begin position="446"/>
        <end position="519"/>
    </location>
</feature>
<feature type="region of interest" description="Disordered" evidence="4">
    <location>
        <begin position="1"/>
        <end position="31"/>
    </location>
</feature>
<feature type="region of interest" description="Disordered" evidence="4">
    <location>
        <begin position="495"/>
        <end position="519"/>
    </location>
</feature>
<feature type="compositionally biased region" description="Polar residues" evidence="4">
    <location>
        <begin position="20"/>
        <end position="29"/>
    </location>
</feature>
<feature type="compositionally biased region" description="Polar residues" evidence="4">
    <location>
        <begin position="510"/>
        <end position="519"/>
    </location>
</feature>
<feature type="modified residue" description="Phosphoserine" evidence="2">
    <location>
        <position position="77"/>
    </location>
</feature>
<feature type="modified residue" description="Phosphoserine" evidence="2">
    <location>
        <position position="85"/>
    </location>
</feature>